<dbReference type="EC" id="3.4.24.-"/>
<dbReference type="EMBL" id="AE017345">
    <property type="protein sequence ID" value="AAW43600.1"/>
    <property type="molecule type" value="Genomic_DNA"/>
</dbReference>
<dbReference type="RefSeq" id="XP_570907.1">
    <property type="nucleotide sequence ID" value="XM_570907.1"/>
</dbReference>
<dbReference type="FunCoup" id="P0CQ26">
    <property type="interactions" value="376"/>
</dbReference>
<dbReference type="STRING" id="214684.P0CQ26"/>
<dbReference type="MEROPS" id="M76.A02"/>
<dbReference type="PaxDb" id="214684-P0CQ26"/>
<dbReference type="EnsemblFungi" id="AAW43600">
    <property type="protein sequence ID" value="AAW43600"/>
    <property type="gene ID" value="CNE03410"/>
</dbReference>
<dbReference type="GeneID" id="3257917"/>
<dbReference type="KEGG" id="cne:CNE03410"/>
<dbReference type="VEuPathDB" id="FungiDB:CNE03410"/>
<dbReference type="eggNOG" id="KOG3314">
    <property type="taxonomic scope" value="Eukaryota"/>
</dbReference>
<dbReference type="HOGENOM" id="CLU_079125_0_0_1"/>
<dbReference type="InParanoid" id="P0CQ26"/>
<dbReference type="OMA" id="EAHQNCV"/>
<dbReference type="OrthoDB" id="285308at2759"/>
<dbReference type="Proteomes" id="UP000002149">
    <property type="component" value="Chromosome 5"/>
</dbReference>
<dbReference type="GO" id="GO:0005743">
    <property type="term" value="C:mitochondrial inner membrane"/>
    <property type="evidence" value="ECO:0007669"/>
    <property type="project" value="UniProtKB-SubCell"/>
</dbReference>
<dbReference type="GO" id="GO:0046872">
    <property type="term" value="F:metal ion binding"/>
    <property type="evidence" value="ECO:0007669"/>
    <property type="project" value="UniProtKB-KW"/>
</dbReference>
<dbReference type="GO" id="GO:0004222">
    <property type="term" value="F:metalloendopeptidase activity"/>
    <property type="evidence" value="ECO:0007669"/>
    <property type="project" value="InterPro"/>
</dbReference>
<dbReference type="GO" id="GO:0034982">
    <property type="term" value="P:mitochondrial protein processing"/>
    <property type="evidence" value="ECO:0000318"/>
    <property type="project" value="GO_Central"/>
</dbReference>
<dbReference type="GO" id="GO:0033615">
    <property type="term" value="P:mitochondrial proton-transporting ATP synthase complex assembly"/>
    <property type="evidence" value="ECO:0000318"/>
    <property type="project" value="GO_Central"/>
</dbReference>
<dbReference type="InterPro" id="IPR019165">
    <property type="entry name" value="Peptidase_M76_ATP23"/>
</dbReference>
<dbReference type="PANTHER" id="PTHR21711">
    <property type="entry name" value="MITOCHONDRIAL INNER MEMBRANE PROTEASE"/>
    <property type="match status" value="1"/>
</dbReference>
<dbReference type="PANTHER" id="PTHR21711:SF0">
    <property type="entry name" value="MITOCHONDRIAL INNER MEMBRANE PROTEASE ATP23 HOMOLOG"/>
    <property type="match status" value="1"/>
</dbReference>
<dbReference type="Pfam" id="PF09768">
    <property type="entry name" value="Peptidase_M76"/>
    <property type="match status" value="1"/>
</dbReference>
<dbReference type="PROSITE" id="PS00142">
    <property type="entry name" value="ZINC_PROTEASE"/>
    <property type="match status" value="1"/>
</dbReference>
<keyword id="KW-0378">Hydrolase</keyword>
<keyword id="KW-0472">Membrane</keyword>
<keyword id="KW-0479">Metal-binding</keyword>
<keyword id="KW-0482">Metalloprotease</keyword>
<keyword id="KW-0496">Mitochondrion</keyword>
<keyword id="KW-0999">Mitochondrion inner membrane</keyword>
<keyword id="KW-0645">Protease</keyword>
<keyword id="KW-1185">Reference proteome</keyword>
<comment type="function">
    <text evidence="1">Has a dual role in the assembly of mitochondrial ATPase. Acts as a protease that removes N-terminal residues of mitochondrial ATPase CF(0) subunit 6 at the intermembrane space side. Also involved in the correct assembly of the membrane-embedded ATPase CF(0) particle, probably mediating association of subunit 6 with the subunit 9 ring (By similarity).</text>
</comment>
<comment type="subcellular location">
    <subcellularLocation>
        <location>Mitochondrion inner membrane</location>
        <topology>Peripheral membrane protein</topology>
        <orientation>Intermembrane side</orientation>
    </subcellularLocation>
    <text evidence="1">Associates loosely with the inner membrane.</text>
</comment>
<comment type="similarity">
    <text evidence="3">Belongs to the peptidase M76 family.</text>
</comment>
<reference key="1">
    <citation type="journal article" date="2005" name="Science">
        <title>The genome of the basidiomycetous yeast and human pathogen Cryptococcus neoformans.</title>
        <authorList>
            <person name="Loftus B.J."/>
            <person name="Fung E."/>
            <person name="Roncaglia P."/>
            <person name="Rowley D."/>
            <person name="Amedeo P."/>
            <person name="Bruno D."/>
            <person name="Vamathevan J."/>
            <person name="Miranda M."/>
            <person name="Anderson I.J."/>
            <person name="Fraser J.A."/>
            <person name="Allen J.E."/>
            <person name="Bosdet I.E."/>
            <person name="Brent M.R."/>
            <person name="Chiu R."/>
            <person name="Doering T.L."/>
            <person name="Donlin M.J."/>
            <person name="D'Souza C.A."/>
            <person name="Fox D.S."/>
            <person name="Grinberg V."/>
            <person name="Fu J."/>
            <person name="Fukushima M."/>
            <person name="Haas B.J."/>
            <person name="Huang J.C."/>
            <person name="Janbon G."/>
            <person name="Jones S.J.M."/>
            <person name="Koo H.L."/>
            <person name="Krzywinski M.I."/>
            <person name="Kwon-Chung K.J."/>
            <person name="Lengeler K.B."/>
            <person name="Maiti R."/>
            <person name="Marra M.A."/>
            <person name="Marra R.E."/>
            <person name="Mathewson C.A."/>
            <person name="Mitchell T.G."/>
            <person name="Pertea M."/>
            <person name="Riggs F.R."/>
            <person name="Salzberg S.L."/>
            <person name="Schein J.E."/>
            <person name="Shvartsbeyn A."/>
            <person name="Shin H."/>
            <person name="Shumway M."/>
            <person name="Specht C.A."/>
            <person name="Suh B.B."/>
            <person name="Tenney A."/>
            <person name="Utterback T.R."/>
            <person name="Wickes B.L."/>
            <person name="Wortman J.R."/>
            <person name="Wye N.H."/>
            <person name="Kronstad J.W."/>
            <person name="Lodge J.K."/>
            <person name="Heitman J."/>
            <person name="Davis R.W."/>
            <person name="Fraser C.M."/>
            <person name="Hyman R.W."/>
        </authorList>
    </citation>
    <scope>NUCLEOTIDE SEQUENCE [LARGE SCALE GENOMIC DNA]</scope>
    <source>
        <strain>JEC21 / ATCC MYA-565</strain>
    </source>
</reference>
<protein>
    <recommendedName>
        <fullName>Mitochondrial inner membrane protease ATP23</fullName>
        <ecNumber>3.4.24.-</ecNumber>
    </recommendedName>
</protein>
<proteinExistence type="inferred from homology"/>
<sequence length="227" mass="25850">MPENPSSSPTEPPEQSAAFEKWRSGLAQFTGLGLSESEKAERERLKAQGKLAKDWDKCEGWKRDLMNYSPMITFLLNHLKLAGCPFPSSAMQCHPCPENRAGGFSPDHGILLCQDRFFNKKHMEDTLAHELVHAFDHCRFKVDWGNLRHHACSEIRAANLSGDCRFTREVKRGFYAFNKQHQACVKRRAILSVLANPACTSPEMAEKAVNEVWESCFTDTRPFDEIY</sequence>
<organism>
    <name type="scientific">Cryptococcus neoformans var. neoformans serotype D (strain JEC21 / ATCC MYA-565)</name>
    <name type="common">Filobasidiella neoformans</name>
    <dbReference type="NCBI Taxonomy" id="214684"/>
    <lineage>
        <taxon>Eukaryota</taxon>
        <taxon>Fungi</taxon>
        <taxon>Dikarya</taxon>
        <taxon>Basidiomycota</taxon>
        <taxon>Agaricomycotina</taxon>
        <taxon>Tremellomycetes</taxon>
        <taxon>Tremellales</taxon>
        <taxon>Cryptococcaceae</taxon>
        <taxon>Cryptococcus</taxon>
        <taxon>Cryptococcus neoformans species complex</taxon>
    </lineage>
</organism>
<evidence type="ECO:0000250" key="1"/>
<evidence type="ECO:0000255" key="2">
    <source>
        <dbReference type="PROSITE-ProRule" id="PRU10095"/>
    </source>
</evidence>
<evidence type="ECO:0000305" key="3"/>
<feature type="chain" id="PRO_0000330061" description="Mitochondrial inner membrane protease ATP23">
    <location>
        <begin position="1"/>
        <end position="227"/>
    </location>
</feature>
<feature type="active site" evidence="2">
    <location>
        <position position="130"/>
    </location>
</feature>
<feature type="binding site" evidence="1">
    <location>
        <position position="129"/>
    </location>
    <ligand>
        <name>a divalent metal cation</name>
        <dbReference type="ChEBI" id="CHEBI:60240"/>
        <note>catalytic</note>
    </ligand>
</feature>
<feature type="binding site" evidence="1">
    <location>
        <position position="133"/>
    </location>
    <ligand>
        <name>a divalent metal cation</name>
        <dbReference type="ChEBI" id="CHEBI:60240"/>
        <note>catalytic</note>
    </ligand>
</feature>
<gene>
    <name type="primary">ATP23</name>
    <name type="ordered locus">CNE03410</name>
</gene>
<name>ATP23_CRYNJ</name>
<accession>P0CQ26</accession>
<accession>Q55S42</accession>
<accession>Q5KGJ3</accession>